<accession>I6Y276</accession>
<organism>
    <name type="scientific">Mycobacterium tuberculosis (strain ATCC 25618 / H37Rv)</name>
    <dbReference type="NCBI Taxonomy" id="83332"/>
    <lineage>
        <taxon>Bacteria</taxon>
        <taxon>Bacillati</taxon>
        <taxon>Actinomycetota</taxon>
        <taxon>Actinomycetes</taxon>
        <taxon>Mycobacteriales</taxon>
        <taxon>Mycobacteriaceae</taxon>
        <taxon>Mycobacterium</taxon>
        <taxon>Mycobacterium tuberculosis complex</taxon>
    </lineage>
</organism>
<proteinExistence type="evidence at protein level"/>
<dbReference type="EMBL" id="AL123456">
    <property type="protein sequence ID" value="CCP45798.1"/>
    <property type="status" value="ALT_INIT"/>
    <property type="molecule type" value="Genomic_DNA"/>
</dbReference>
<dbReference type="RefSeq" id="NP_217509.3">
    <property type="nucleotide sequence ID" value="NC_000962.3"/>
</dbReference>
<dbReference type="RefSeq" id="WP_003415138.1">
    <property type="nucleotide sequence ID" value="NZ_NVQJ01000041.1"/>
</dbReference>
<dbReference type="RefSeq" id="WP_003901510.1">
    <property type="nucleotide sequence ID" value="NC_000962.3"/>
</dbReference>
<dbReference type="SMR" id="I6Y276"/>
<dbReference type="FunCoup" id="I6Y276">
    <property type="interactions" value="315"/>
</dbReference>
<dbReference type="STRING" id="83332.Rv2993c"/>
<dbReference type="PaxDb" id="83332-Rv2993c"/>
<dbReference type="DNASU" id="887867"/>
<dbReference type="GeneID" id="887867"/>
<dbReference type="KEGG" id="mtu:Rv2993c"/>
<dbReference type="PATRIC" id="fig|83332.111.peg.3336"/>
<dbReference type="TubercuList" id="Rv2993c"/>
<dbReference type="eggNOG" id="COG0179">
    <property type="taxonomic scope" value="Bacteria"/>
</dbReference>
<dbReference type="InParanoid" id="I6Y276"/>
<dbReference type="OrthoDB" id="9805307at2"/>
<dbReference type="PhylomeDB" id="I6Y276"/>
<dbReference type="Proteomes" id="UP000001584">
    <property type="component" value="Chromosome"/>
</dbReference>
<dbReference type="GO" id="GO:0018773">
    <property type="term" value="F:acetylpyruvate hydrolase activity"/>
    <property type="evidence" value="ECO:0000318"/>
    <property type="project" value="GO_Central"/>
</dbReference>
<dbReference type="GO" id="GO:0046872">
    <property type="term" value="F:metal ion binding"/>
    <property type="evidence" value="ECO:0007669"/>
    <property type="project" value="UniProtKB-KW"/>
</dbReference>
<dbReference type="FunFam" id="3.90.850.10:FF:000002">
    <property type="entry name" value="2-hydroxyhepta-2,4-diene-1,7-dioate isomerase"/>
    <property type="match status" value="1"/>
</dbReference>
<dbReference type="Gene3D" id="2.30.30.370">
    <property type="entry name" value="FAH"/>
    <property type="match status" value="1"/>
</dbReference>
<dbReference type="Gene3D" id="3.90.850.10">
    <property type="entry name" value="Fumarylacetoacetase-like, C-terminal domain"/>
    <property type="match status" value="1"/>
</dbReference>
<dbReference type="InterPro" id="IPR011234">
    <property type="entry name" value="Fumarylacetoacetase-like_C"/>
</dbReference>
<dbReference type="InterPro" id="IPR036663">
    <property type="entry name" value="Fumarylacetoacetase_C_sf"/>
</dbReference>
<dbReference type="InterPro" id="IPR018833">
    <property type="entry name" value="Rv2993c-like_N"/>
</dbReference>
<dbReference type="PANTHER" id="PTHR11820">
    <property type="entry name" value="ACYLPYRUVASE"/>
    <property type="match status" value="1"/>
</dbReference>
<dbReference type="PANTHER" id="PTHR11820:SF7">
    <property type="entry name" value="ACYLPYRUVASE FAHD1, MITOCHONDRIAL"/>
    <property type="match status" value="1"/>
</dbReference>
<dbReference type="Pfam" id="PF01557">
    <property type="entry name" value="FAA_hydrolase"/>
    <property type="match status" value="1"/>
</dbReference>
<dbReference type="Pfam" id="PF10370">
    <property type="entry name" value="Rv2993c-like_N"/>
    <property type="match status" value="1"/>
</dbReference>
<dbReference type="SUPFAM" id="SSF56529">
    <property type="entry name" value="FAH"/>
    <property type="match status" value="1"/>
</dbReference>
<reference evidence="4" key="1">
    <citation type="journal article" date="1998" name="Nature">
        <title>Deciphering the biology of Mycobacterium tuberculosis from the complete genome sequence.</title>
        <authorList>
            <person name="Cole S.T."/>
            <person name="Brosch R."/>
            <person name="Parkhill J."/>
            <person name="Garnier T."/>
            <person name="Churcher C.M."/>
            <person name="Harris D.E."/>
            <person name="Gordon S.V."/>
            <person name="Eiglmeier K."/>
            <person name="Gas S."/>
            <person name="Barry C.E. III"/>
            <person name="Tekaia F."/>
            <person name="Badcock K."/>
            <person name="Basham D."/>
            <person name="Brown D."/>
            <person name="Chillingworth T."/>
            <person name="Connor R."/>
            <person name="Davies R.M."/>
            <person name="Devlin K."/>
            <person name="Feltwell T."/>
            <person name="Gentles S."/>
            <person name="Hamlin N."/>
            <person name="Holroyd S."/>
            <person name="Hornsby T."/>
            <person name="Jagels K."/>
            <person name="Krogh A."/>
            <person name="McLean J."/>
            <person name="Moule S."/>
            <person name="Murphy L.D."/>
            <person name="Oliver S."/>
            <person name="Osborne J."/>
            <person name="Quail M.A."/>
            <person name="Rajandream M.A."/>
            <person name="Rogers J."/>
            <person name="Rutter S."/>
            <person name="Seeger K."/>
            <person name="Skelton S."/>
            <person name="Squares S."/>
            <person name="Squares R."/>
            <person name="Sulston J.E."/>
            <person name="Taylor K."/>
            <person name="Whitehead S."/>
            <person name="Barrell B.G."/>
        </authorList>
    </citation>
    <scope>NUCLEOTIDE SEQUENCE [LARGE SCALE GENOMIC DNA]</scope>
    <source>
        <strain>ATCC 25618 / H37Rv</strain>
    </source>
</reference>
<reference evidence="5" key="2">
    <citation type="journal article" date="2011" name="Mol. Cell. Proteomics">
        <title>Proteogenomic analysis of Mycobacterium tuberculosis by high resolution mass spectrometry.</title>
        <authorList>
            <person name="Kelkar D.S."/>
            <person name="Kumar D."/>
            <person name="Kumar P."/>
            <person name="Balakrishnan L."/>
            <person name="Muthusamy B."/>
            <person name="Yadav A.K."/>
            <person name="Shrivastava P."/>
            <person name="Marimuthu A."/>
            <person name="Anand S."/>
            <person name="Sundaram H."/>
            <person name="Kingsbury R."/>
            <person name="Harsha H.C."/>
            <person name="Nair B."/>
            <person name="Prasad T.S."/>
            <person name="Chauhan D.S."/>
            <person name="Katoch K."/>
            <person name="Katoch V.M."/>
            <person name="Kumar P."/>
            <person name="Chaerkady R."/>
            <person name="Ramachandran S."/>
            <person name="Dash D."/>
            <person name="Pandey A."/>
        </authorList>
    </citation>
    <scope>IDENTIFICATION BY MASS SPECTROMETRY [LARGE SCALE ANALYSIS]</scope>
    <source>
        <strain>ATCC 25618 / H37Rv</strain>
    </source>
</reference>
<reference key="3">
    <citation type="journal article" date="2022" name="Genomics">
        <title>Deep N-terminomics of Mycobacterium tuberculosis H37Rv extensively correct annotated encoding genes.</title>
        <authorList>
            <person name="Shi J."/>
            <person name="Meng S."/>
            <person name="Wan L."/>
            <person name="Zhang Z."/>
            <person name="Jiang S."/>
            <person name="Zhu H."/>
            <person name="Dai E."/>
            <person name="Chang L."/>
            <person name="Gao H."/>
            <person name="Wan K."/>
            <person name="Zhang L."/>
            <person name="Zhao X."/>
            <person name="Liu H."/>
            <person name="Lyu Z."/>
            <person name="Zhang Y."/>
            <person name="Xu P."/>
        </authorList>
    </citation>
    <scope>PROTEIN SEQUENCE OF 20-54 AND 83-98</scope>
    <scope>SEQUENCE REVISION TO N-TERMINUS</scope>
    <source>
        <strain>H37Rv</strain>
    </source>
</reference>
<feature type="chain" id="PRO_0000456000" description="Protein Rv2993c">
    <location>
        <begin position="1"/>
        <end position="265"/>
    </location>
</feature>
<feature type="binding site" evidence="1">
    <location>
        <position position="114"/>
    </location>
    <ligand>
        <name>a divalent metal cation</name>
        <dbReference type="ChEBI" id="CHEBI:60240"/>
    </ligand>
</feature>
<feature type="binding site" evidence="1">
    <location>
        <position position="116"/>
    </location>
    <ligand>
        <name>a divalent metal cation</name>
        <dbReference type="ChEBI" id="CHEBI:60240"/>
    </ligand>
</feature>
<feature type="binding site" evidence="1">
    <location>
        <position position="145"/>
    </location>
    <ligand>
        <name>a divalent metal cation</name>
        <dbReference type="ChEBI" id="CHEBI:60240"/>
    </ligand>
</feature>
<sequence>MRIGRIASPDGVAFASIDGELGEPSEMTAREIAEHPFGTPTFTGRSWPLADVRLLAPILASKVVCVGKNYADHIAEMGGRPPADPVIFLKPNTAIIGPNTPIRLPANASPVHFEGELAIVIGRACKDVPAAQAVDNILGYTIGNDVSARDQQQSDGQWTRAKGHDTFCPVGPWIVTDLAPFDPADLELRTVVNGDVKQHARTSLMIHDIGAIVEWISAIMTLLPGDLILTGTPAGVGPIEDGDTVSITIEGIGTLTNPVVRKGKP</sequence>
<name>Y2993_MYCTU</name>
<evidence type="ECO:0000250" key="1">
    <source>
        <dbReference type="UniProtKB" id="P37352"/>
    </source>
</evidence>
<evidence type="ECO:0000269" key="2">
    <source>
    </source>
</evidence>
<evidence type="ECO:0000305" key="3"/>
<evidence type="ECO:0000312" key="4">
    <source>
        <dbReference type="EMBL" id="CCP45798.1"/>
    </source>
</evidence>
<evidence type="ECO:0007744" key="5">
    <source>
    </source>
</evidence>
<gene>
    <name evidence="4" type="ordered locus">Rv2993c</name>
</gene>
<protein>
    <recommendedName>
        <fullName>Protein Rv2993c</fullName>
    </recommendedName>
</protein>
<keyword id="KW-0903">Direct protein sequencing</keyword>
<keyword id="KW-0479">Metal-binding</keyword>
<keyword id="KW-1185">Reference proteome</keyword>
<comment type="cofactor">
    <cofactor evidence="1">
        <name>a divalent metal cation</name>
        <dbReference type="ChEBI" id="CHEBI:60240"/>
    </cofactor>
</comment>
<comment type="similarity">
    <text evidence="3">In the C-terminal section; belongs to the FAH family.</text>
</comment>
<comment type="sequence caution" evidence="2">
    <conflict type="erroneous initiation">
        <sequence resource="EMBL-CDS" id="CCP45798"/>
    </conflict>
    <text>Truncated N-terminus.</text>
</comment>